<dbReference type="EC" id="7.6.2.-" evidence="1"/>
<dbReference type="EMBL" id="AE014299">
    <property type="protein sequence ID" value="AAN53897.1"/>
    <property type="molecule type" value="Genomic_DNA"/>
</dbReference>
<dbReference type="RefSeq" id="NP_716452.1">
    <property type="nucleotide sequence ID" value="NC_004347.2"/>
</dbReference>
<dbReference type="RefSeq" id="WP_011071115.1">
    <property type="nucleotide sequence ID" value="NC_004347.2"/>
</dbReference>
<dbReference type="SMR" id="Q8EIL8"/>
<dbReference type="STRING" id="211586.SO_0821"/>
<dbReference type="PaxDb" id="211586-SO_0821"/>
<dbReference type="KEGG" id="son:SO_0821"/>
<dbReference type="PATRIC" id="fig|211586.12.peg.788"/>
<dbReference type="eggNOG" id="COG0577">
    <property type="taxonomic scope" value="Bacteria"/>
</dbReference>
<dbReference type="eggNOG" id="COG1136">
    <property type="taxonomic scope" value="Bacteria"/>
</dbReference>
<dbReference type="HOGENOM" id="CLU_000604_78_1_6"/>
<dbReference type="OrthoDB" id="9770036at2"/>
<dbReference type="PhylomeDB" id="Q8EIL8"/>
<dbReference type="BioCyc" id="SONE211586:G1GMP-767-MONOMER"/>
<dbReference type="Proteomes" id="UP000008186">
    <property type="component" value="Chromosome"/>
</dbReference>
<dbReference type="GO" id="GO:0005886">
    <property type="term" value="C:plasma membrane"/>
    <property type="evidence" value="ECO:0000318"/>
    <property type="project" value="GO_Central"/>
</dbReference>
<dbReference type="GO" id="GO:0005524">
    <property type="term" value="F:ATP binding"/>
    <property type="evidence" value="ECO:0007669"/>
    <property type="project" value="UniProtKB-KW"/>
</dbReference>
<dbReference type="GO" id="GO:0016887">
    <property type="term" value="F:ATP hydrolysis activity"/>
    <property type="evidence" value="ECO:0007669"/>
    <property type="project" value="InterPro"/>
</dbReference>
<dbReference type="GO" id="GO:0022857">
    <property type="term" value="F:transmembrane transporter activity"/>
    <property type="evidence" value="ECO:0000318"/>
    <property type="project" value="GO_Central"/>
</dbReference>
<dbReference type="GO" id="GO:0046677">
    <property type="term" value="P:response to antibiotic"/>
    <property type="evidence" value="ECO:0007669"/>
    <property type="project" value="UniProtKB-KW"/>
</dbReference>
<dbReference type="CDD" id="cd03255">
    <property type="entry name" value="ABC_MJ0796_LolCDE_FtsE"/>
    <property type="match status" value="1"/>
</dbReference>
<dbReference type="FunFam" id="3.40.50.300:FF:000032">
    <property type="entry name" value="Export ABC transporter ATP-binding protein"/>
    <property type="match status" value="1"/>
</dbReference>
<dbReference type="Gene3D" id="3.40.50.300">
    <property type="entry name" value="P-loop containing nucleotide triphosphate hydrolases"/>
    <property type="match status" value="1"/>
</dbReference>
<dbReference type="InterPro" id="IPR003593">
    <property type="entry name" value="AAA+_ATPase"/>
</dbReference>
<dbReference type="InterPro" id="IPR003838">
    <property type="entry name" value="ABC3_permease_C"/>
</dbReference>
<dbReference type="InterPro" id="IPR003439">
    <property type="entry name" value="ABC_transporter-like_ATP-bd"/>
</dbReference>
<dbReference type="InterPro" id="IPR017871">
    <property type="entry name" value="ABC_transporter-like_CS"/>
</dbReference>
<dbReference type="InterPro" id="IPR017911">
    <property type="entry name" value="MacB-like_ATP-bd"/>
</dbReference>
<dbReference type="InterPro" id="IPR025857">
    <property type="entry name" value="MacB_PCD"/>
</dbReference>
<dbReference type="InterPro" id="IPR050250">
    <property type="entry name" value="Macrolide_Exporter_MacB"/>
</dbReference>
<dbReference type="InterPro" id="IPR027417">
    <property type="entry name" value="P-loop_NTPase"/>
</dbReference>
<dbReference type="PANTHER" id="PTHR30572:SF14">
    <property type="entry name" value="MACROLIDE EXPORT ATP-BINDING_PERMEASE PROTEIN MACB"/>
    <property type="match status" value="1"/>
</dbReference>
<dbReference type="PANTHER" id="PTHR30572">
    <property type="entry name" value="MEMBRANE COMPONENT OF TRANSPORTER-RELATED"/>
    <property type="match status" value="1"/>
</dbReference>
<dbReference type="Pfam" id="PF00005">
    <property type="entry name" value="ABC_tran"/>
    <property type="match status" value="1"/>
</dbReference>
<dbReference type="Pfam" id="PF02687">
    <property type="entry name" value="FtsX"/>
    <property type="match status" value="1"/>
</dbReference>
<dbReference type="Pfam" id="PF12704">
    <property type="entry name" value="MacB_PCD"/>
    <property type="match status" value="1"/>
</dbReference>
<dbReference type="SMART" id="SM00382">
    <property type="entry name" value="AAA"/>
    <property type="match status" value="1"/>
</dbReference>
<dbReference type="SUPFAM" id="SSF52540">
    <property type="entry name" value="P-loop containing nucleoside triphosphate hydrolases"/>
    <property type="match status" value="1"/>
</dbReference>
<dbReference type="PROSITE" id="PS00211">
    <property type="entry name" value="ABC_TRANSPORTER_1"/>
    <property type="match status" value="1"/>
</dbReference>
<dbReference type="PROSITE" id="PS50893">
    <property type="entry name" value="ABC_TRANSPORTER_2"/>
    <property type="match status" value="1"/>
</dbReference>
<dbReference type="PROSITE" id="PS51267">
    <property type="entry name" value="MACB"/>
    <property type="match status" value="1"/>
</dbReference>
<keyword id="KW-0046">Antibiotic resistance</keyword>
<keyword id="KW-0067">ATP-binding</keyword>
<keyword id="KW-0997">Cell inner membrane</keyword>
<keyword id="KW-1003">Cell membrane</keyword>
<keyword id="KW-0472">Membrane</keyword>
<keyword id="KW-0547">Nucleotide-binding</keyword>
<keyword id="KW-1185">Reference proteome</keyword>
<keyword id="KW-1278">Translocase</keyword>
<keyword id="KW-0812">Transmembrane</keyword>
<keyword id="KW-1133">Transmembrane helix</keyword>
<keyword id="KW-0813">Transport</keyword>
<accession>Q8EIL8</accession>
<proteinExistence type="inferred from homology"/>
<reference key="1">
    <citation type="journal article" date="2002" name="Nat. Biotechnol.">
        <title>Genome sequence of the dissimilatory metal ion-reducing bacterium Shewanella oneidensis.</title>
        <authorList>
            <person name="Heidelberg J.F."/>
            <person name="Paulsen I.T."/>
            <person name="Nelson K.E."/>
            <person name="Gaidos E.J."/>
            <person name="Nelson W.C."/>
            <person name="Read T.D."/>
            <person name="Eisen J.A."/>
            <person name="Seshadri R."/>
            <person name="Ward N.L."/>
            <person name="Methe B.A."/>
            <person name="Clayton R.A."/>
            <person name="Meyer T."/>
            <person name="Tsapin A."/>
            <person name="Scott J."/>
            <person name="Beanan M.J."/>
            <person name="Brinkac L.M."/>
            <person name="Daugherty S.C."/>
            <person name="DeBoy R.T."/>
            <person name="Dodson R.J."/>
            <person name="Durkin A.S."/>
            <person name="Haft D.H."/>
            <person name="Kolonay J.F."/>
            <person name="Madupu R."/>
            <person name="Peterson J.D."/>
            <person name="Umayam L.A."/>
            <person name="White O."/>
            <person name="Wolf A.M."/>
            <person name="Vamathevan J.J."/>
            <person name="Weidman J.F."/>
            <person name="Impraim M."/>
            <person name="Lee K."/>
            <person name="Berry K.J."/>
            <person name="Lee C."/>
            <person name="Mueller J."/>
            <person name="Khouri H.M."/>
            <person name="Gill J."/>
            <person name="Utterback T.R."/>
            <person name="McDonald L.A."/>
            <person name="Feldblyum T.V."/>
            <person name="Smith H.O."/>
            <person name="Venter J.C."/>
            <person name="Nealson K.H."/>
            <person name="Fraser C.M."/>
        </authorList>
    </citation>
    <scope>NUCLEOTIDE SEQUENCE [LARGE SCALE GENOMIC DNA]</scope>
    <source>
        <strain>ATCC 700550 / JCM 31522 / CIP 106686 / LMG 19005 / NCIMB 14063 / MR-1</strain>
    </source>
</reference>
<feature type="chain" id="PRO_0000269978" description="Macrolide export ATP-binding/permease protein MacB">
    <location>
        <begin position="1"/>
        <end position="656"/>
    </location>
</feature>
<feature type="transmembrane region" description="Helical" evidence="1">
    <location>
        <begin position="277"/>
        <end position="297"/>
    </location>
</feature>
<feature type="transmembrane region" description="Helical" evidence="1">
    <location>
        <begin position="531"/>
        <end position="551"/>
    </location>
</feature>
<feature type="transmembrane region" description="Helical" evidence="1">
    <location>
        <begin position="586"/>
        <end position="606"/>
    </location>
</feature>
<feature type="transmembrane region" description="Helical" evidence="1">
    <location>
        <begin position="621"/>
        <end position="641"/>
    </location>
</feature>
<feature type="domain" description="ABC transporter" evidence="1">
    <location>
        <begin position="6"/>
        <end position="244"/>
    </location>
</feature>
<feature type="binding site" evidence="1">
    <location>
        <begin position="42"/>
        <end position="49"/>
    </location>
    <ligand>
        <name>ATP</name>
        <dbReference type="ChEBI" id="CHEBI:30616"/>
    </ligand>
</feature>
<protein>
    <recommendedName>
        <fullName evidence="1">Macrolide export ATP-binding/permease protein MacB</fullName>
        <ecNumber evidence="1">7.6.2.-</ecNumber>
    </recommendedName>
</protein>
<name>MACB_SHEON</name>
<organism>
    <name type="scientific">Shewanella oneidensis (strain ATCC 700550 / JCM 31522 / CIP 106686 / LMG 19005 / NCIMB 14063 / MR-1)</name>
    <dbReference type="NCBI Taxonomy" id="211586"/>
    <lineage>
        <taxon>Bacteria</taxon>
        <taxon>Pseudomonadati</taxon>
        <taxon>Pseudomonadota</taxon>
        <taxon>Gammaproteobacteria</taxon>
        <taxon>Alteromonadales</taxon>
        <taxon>Shewanellaceae</taxon>
        <taxon>Shewanella</taxon>
    </lineage>
</organism>
<sequence length="656" mass="70560">MTKPLLEVSACYRSFQAGEQQLTVLKDINLSIARGEMVAIVGASGSGKSTLMNILGCLDKPSKGAYFIDGQDTSQMDVDELAKLRREHFGFIFQRYHLLGDLNAVGNVEVPAVYAGKDRLERRDRAESLLSRLGLGERLDHKPNQLSGGQQQRVSVARALMNGGDVILADEPTGALDSHSGEEMMRLLQELHREGHTIIIVTHDMHVAQHADRIIEIKDGVIISDEPNLASQTAVKAQVDMSLAKPSGATRVAAWDRYAEALKMALLAMSTHRLRTFLTMLGIIIGIASVVSVVALGEGSQREILKSISSMGTNTIDIRPGLGFGDRRSARVRTLTASDANALKNLPYVDSVTPSISSSVTVRLGNKAVTASVNGVGPEFFRVRGYELAQGQFWDDDSVDALAQDAVIDDNTRKQLFPDSTGAMGSVIGQVIFLGDLPVRIIGVTKPKESAFGNSDALNVWVPYTTVSGRMVGKKYLDGITVRLDESVPSNAAEQGIITLLKMRHGTQDFFTINTDTIRQNIEKTTATMTLLISAIAVISLVVGGIGVMNIMLVSVTERTREIGVRMAVGARQSDILRQFLIEAVLVCLCGGALGVALAYLIGVVFAQAGGSFQMIYSTTSIVAAFACSTLIGVLFGFLPARNAARLDPVEALARE</sequence>
<evidence type="ECO:0000255" key="1">
    <source>
        <dbReference type="HAMAP-Rule" id="MF_01720"/>
    </source>
</evidence>
<comment type="function">
    <text evidence="1">Part of the tripartite efflux system MacAB-TolC. MacB is a non-canonical ABC transporter that contains transmembrane domains (TMD), which form a pore in the inner membrane, and an ATP-binding domain (NBD), which is responsible for energy generation. Confers resistance against macrolides.</text>
</comment>
<comment type="subunit">
    <text evidence="1">Homodimer. Part of the tripartite efflux system MacAB-TolC, which is composed of an inner membrane transporter, MacB, a periplasmic membrane fusion protein, MacA, and an outer membrane component, TolC. The complex forms a large protein conduit and can translocate molecules across both the inner and outer membranes. Interacts with MacA.</text>
</comment>
<comment type="subcellular location">
    <subcellularLocation>
        <location evidence="1">Cell inner membrane</location>
        <topology evidence="1">Multi-pass membrane protein</topology>
    </subcellularLocation>
</comment>
<comment type="similarity">
    <text evidence="1">Belongs to the ABC transporter superfamily. Macrolide exporter (TC 3.A.1.122) family.</text>
</comment>
<gene>
    <name evidence="1" type="primary">macB</name>
    <name type="ordered locus">SO_0821</name>
</gene>